<accession>Q49YB4</accession>
<dbReference type="EC" id="6.1.1.3" evidence="1"/>
<dbReference type="EMBL" id="AP008934">
    <property type="protein sequence ID" value="BAE18227.1"/>
    <property type="molecule type" value="Genomic_DNA"/>
</dbReference>
<dbReference type="RefSeq" id="WP_011302924.1">
    <property type="nucleotide sequence ID" value="NZ_MTGA01000038.1"/>
</dbReference>
<dbReference type="SMR" id="Q49YB4"/>
<dbReference type="GeneID" id="3615450"/>
<dbReference type="KEGG" id="ssp:SSP1082"/>
<dbReference type="PATRIC" id="fig|342451.11.peg.1081"/>
<dbReference type="eggNOG" id="COG0441">
    <property type="taxonomic scope" value="Bacteria"/>
</dbReference>
<dbReference type="HOGENOM" id="CLU_008554_0_1_9"/>
<dbReference type="OrthoDB" id="9802304at2"/>
<dbReference type="Proteomes" id="UP000006371">
    <property type="component" value="Chromosome"/>
</dbReference>
<dbReference type="GO" id="GO:0005737">
    <property type="term" value="C:cytoplasm"/>
    <property type="evidence" value="ECO:0007669"/>
    <property type="project" value="UniProtKB-SubCell"/>
</dbReference>
<dbReference type="GO" id="GO:0005524">
    <property type="term" value="F:ATP binding"/>
    <property type="evidence" value="ECO:0007669"/>
    <property type="project" value="UniProtKB-UniRule"/>
</dbReference>
<dbReference type="GO" id="GO:0140096">
    <property type="term" value="F:catalytic activity, acting on a protein"/>
    <property type="evidence" value="ECO:0007669"/>
    <property type="project" value="UniProtKB-ARBA"/>
</dbReference>
<dbReference type="GO" id="GO:0046872">
    <property type="term" value="F:metal ion binding"/>
    <property type="evidence" value="ECO:0007669"/>
    <property type="project" value="UniProtKB-KW"/>
</dbReference>
<dbReference type="GO" id="GO:0004829">
    <property type="term" value="F:threonine-tRNA ligase activity"/>
    <property type="evidence" value="ECO:0007669"/>
    <property type="project" value="UniProtKB-UniRule"/>
</dbReference>
<dbReference type="GO" id="GO:0016740">
    <property type="term" value="F:transferase activity"/>
    <property type="evidence" value="ECO:0007669"/>
    <property type="project" value="UniProtKB-ARBA"/>
</dbReference>
<dbReference type="GO" id="GO:0000049">
    <property type="term" value="F:tRNA binding"/>
    <property type="evidence" value="ECO:0007669"/>
    <property type="project" value="UniProtKB-KW"/>
</dbReference>
<dbReference type="GO" id="GO:0006435">
    <property type="term" value="P:threonyl-tRNA aminoacylation"/>
    <property type="evidence" value="ECO:0007669"/>
    <property type="project" value="UniProtKB-UniRule"/>
</dbReference>
<dbReference type="CDD" id="cd01667">
    <property type="entry name" value="TGS_ThrRS"/>
    <property type="match status" value="1"/>
</dbReference>
<dbReference type="CDD" id="cd00860">
    <property type="entry name" value="ThrRS_anticodon"/>
    <property type="match status" value="1"/>
</dbReference>
<dbReference type="CDD" id="cd00771">
    <property type="entry name" value="ThrRS_core"/>
    <property type="match status" value="1"/>
</dbReference>
<dbReference type="FunFam" id="3.10.20.30:FF:000005">
    <property type="entry name" value="Threonine--tRNA ligase"/>
    <property type="match status" value="1"/>
</dbReference>
<dbReference type="FunFam" id="3.30.54.20:FF:000002">
    <property type="entry name" value="Threonine--tRNA ligase"/>
    <property type="match status" value="1"/>
</dbReference>
<dbReference type="FunFam" id="3.30.930.10:FF:000002">
    <property type="entry name" value="Threonine--tRNA ligase"/>
    <property type="match status" value="1"/>
</dbReference>
<dbReference type="FunFam" id="3.40.50.800:FF:000001">
    <property type="entry name" value="Threonine--tRNA ligase"/>
    <property type="match status" value="1"/>
</dbReference>
<dbReference type="FunFam" id="3.30.980.10:FF:000005">
    <property type="entry name" value="Threonyl-tRNA synthetase, mitochondrial"/>
    <property type="match status" value="1"/>
</dbReference>
<dbReference type="Gene3D" id="3.10.20.30">
    <property type="match status" value="1"/>
</dbReference>
<dbReference type="Gene3D" id="3.30.54.20">
    <property type="match status" value="1"/>
</dbReference>
<dbReference type="Gene3D" id="3.40.50.800">
    <property type="entry name" value="Anticodon-binding domain"/>
    <property type="match status" value="1"/>
</dbReference>
<dbReference type="Gene3D" id="3.30.930.10">
    <property type="entry name" value="Bira Bifunctional Protein, Domain 2"/>
    <property type="match status" value="1"/>
</dbReference>
<dbReference type="Gene3D" id="3.30.980.10">
    <property type="entry name" value="Threonyl-trna Synthetase, Chain A, domain 2"/>
    <property type="match status" value="1"/>
</dbReference>
<dbReference type="HAMAP" id="MF_00184">
    <property type="entry name" value="Thr_tRNA_synth"/>
    <property type="match status" value="1"/>
</dbReference>
<dbReference type="InterPro" id="IPR002314">
    <property type="entry name" value="aa-tRNA-synt_IIb"/>
</dbReference>
<dbReference type="InterPro" id="IPR006195">
    <property type="entry name" value="aa-tRNA-synth_II"/>
</dbReference>
<dbReference type="InterPro" id="IPR045864">
    <property type="entry name" value="aa-tRNA-synth_II/BPL/LPL"/>
</dbReference>
<dbReference type="InterPro" id="IPR004154">
    <property type="entry name" value="Anticodon-bd"/>
</dbReference>
<dbReference type="InterPro" id="IPR036621">
    <property type="entry name" value="Anticodon-bd_dom_sf"/>
</dbReference>
<dbReference type="InterPro" id="IPR012675">
    <property type="entry name" value="Beta-grasp_dom_sf"/>
</dbReference>
<dbReference type="InterPro" id="IPR004095">
    <property type="entry name" value="TGS"/>
</dbReference>
<dbReference type="InterPro" id="IPR012676">
    <property type="entry name" value="TGS-like"/>
</dbReference>
<dbReference type="InterPro" id="IPR002320">
    <property type="entry name" value="Thr-tRNA-ligase_IIa"/>
</dbReference>
<dbReference type="InterPro" id="IPR018163">
    <property type="entry name" value="Thr/Ala-tRNA-synth_IIc_edit"/>
</dbReference>
<dbReference type="InterPro" id="IPR047246">
    <property type="entry name" value="ThrRS_anticodon"/>
</dbReference>
<dbReference type="InterPro" id="IPR033728">
    <property type="entry name" value="ThrRS_core"/>
</dbReference>
<dbReference type="InterPro" id="IPR012947">
    <property type="entry name" value="tRNA_SAD"/>
</dbReference>
<dbReference type="NCBIfam" id="TIGR00418">
    <property type="entry name" value="thrS"/>
    <property type="match status" value="1"/>
</dbReference>
<dbReference type="PANTHER" id="PTHR11451:SF56">
    <property type="entry name" value="THREONINE--TRNA LIGASE 1"/>
    <property type="match status" value="1"/>
</dbReference>
<dbReference type="PANTHER" id="PTHR11451">
    <property type="entry name" value="THREONINE-TRNA LIGASE"/>
    <property type="match status" value="1"/>
</dbReference>
<dbReference type="Pfam" id="PF03129">
    <property type="entry name" value="HGTP_anticodon"/>
    <property type="match status" value="1"/>
</dbReference>
<dbReference type="Pfam" id="PF02824">
    <property type="entry name" value="TGS"/>
    <property type="match status" value="1"/>
</dbReference>
<dbReference type="Pfam" id="PF00587">
    <property type="entry name" value="tRNA-synt_2b"/>
    <property type="match status" value="1"/>
</dbReference>
<dbReference type="Pfam" id="PF07973">
    <property type="entry name" value="tRNA_SAD"/>
    <property type="match status" value="1"/>
</dbReference>
<dbReference type="PRINTS" id="PR01047">
    <property type="entry name" value="TRNASYNTHTHR"/>
</dbReference>
<dbReference type="SMART" id="SM00863">
    <property type="entry name" value="tRNA_SAD"/>
    <property type="match status" value="1"/>
</dbReference>
<dbReference type="SUPFAM" id="SSF52954">
    <property type="entry name" value="Class II aaRS ABD-related"/>
    <property type="match status" value="1"/>
</dbReference>
<dbReference type="SUPFAM" id="SSF55681">
    <property type="entry name" value="Class II aaRS and biotin synthetases"/>
    <property type="match status" value="1"/>
</dbReference>
<dbReference type="SUPFAM" id="SSF81271">
    <property type="entry name" value="TGS-like"/>
    <property type="match status" value="1"/>
</dbReference>
<dbReference type="SUPFAM" id="SSF55186">
    <property type="entry name" value="ThrRS/AlaRS common domain"/>
    <property type="match status" value="1"/>
</dbReference>
<dbReference type="PROSITE" id="PS50862">
    <property type="entry name" value="AA_TRNA_LIGASE_II"/>
    <property type="match status" value="1"/>
</dbReference>
<dbReference type="PROSITE" id="PS51880">
    <property type="entry name" value="TGS"/>
    <property type="match status" value="1"/>
</dbReference>
<evidence type="ECO:0000255" key="1">
    <source>
        <dbReference type="HAMAP-Rule" id="MF_00184"/>
    </source>
</evidence>
<evidence type="ECO:0000255" key="2">
    <source>
        <dbReference type="PROSITE-ProRule" id="PRU01228"/>
    </source>
</evidence>
<comment type="function">
    <text evidence="1">Catalyzes the attachment of threonine to tRNA(Thr) in a two-step reaction: L-threonine is first activated by ATP to form Thr-AMP and then transferred to the acceptor end of tRNA(Thr). Also edits incorrectly charged L-seryl-tRNA(Thr).</text>
</comment>
<comment type="catalytic activity">
    <reaction evidence="1">
        <text>tRNA(Thr) + L-threonine + ATP = L-threonyl-tRNA(Thr) + AMP + diphosphate + H(+)</text>
        <dbReference type="Rhea" id="RHEA:24624"/>
        <dbReference type="Rhea" id="RHEA-COMP:9670"/>
        <dbReference type="Rhea" id="RHEA-COMP:9704"/>
        <dbReference type="ChEBI" id="CHEBI:15378"/>
        <dbReference type="ChEBI" id="CHEBI:30616"/>
        <dbReference type="ChEBI" id="CHEBI:33019"/>
        <dbReference type="ChEBI" id="CHEBI:57926"/>
        <dbReference type="ChEBI" id="CHEBI:78442"/>
        <dbReference type="ChEBI" id="CHEBI:78534"/>
        <dbReference type="ChEBI" id="CHEBI:456215"/>
        <dbReference type="EC" id="6.1.1.3"/>
    </reaction>
</comment>
<comment type="cofactor">
    <cofactor evidence="1">
        <name>Zn(2+)</name>
        <dbReference type="ChEBI" id="CHEBI:29105"/>
    </cofactor>
    <text evidence="1">Binds 1 zinc ion per subunit.</text>
</comment>
<comment type="subunit">
    <text evidence="1">Homodimer.</text>
</comment>
<comment type="subcellular location">
    <subcellularLocation>
        <location evidence="1">Cytoplasm</location>
    </subcellularLocation>
</comment>
<comment type="similarity">
    <text evidence="1">Belongs to the class-II aminoacyl-tRNA synthetase family.</text>
</comment>
<sequence>MDQIKIKFPDGNTKEFDKGTTTEDIAQSISPGLRKKAVAGKLNGQLIDLTRPIESDGDIEIVTPGSDEALEVLRHSTAHLMAQALKRLYGEVHFGVGPVIEGGFYYDFDMEESISSDDFEKIEKTMKQIANENYPIERKVVSRNEAKAFFSDDPYKQELIDAIPEDENVTLYTQGEFTDLCRGVHVPSTSKIKEFKLLSTAGAYWRGDSNNKMLQRIYGTAFFDKKDLKAHLQMLEERKERDHRKIGKELELFSNNPLVGAGLPLWLPNGATIRREIERYIVDKEVSMGYDHVYTPVMANVDLYKTSGHWDHYQEDMFPTMKLDEYEEMVLRPMNCPHHMMIYANKPHSYRELPIRIAELGTMHRYEASGAVSGLQRVRGMTLNDAHIFVRPDQIKEEFKRVVNLIIDVYNDFNFENYSFRLSYRDPEDKEKYFDDDEMWIKAESMLKEAVDELGLDYEEAIGEAAFYGPKLDVQVQTAMGKEETLSTAQLDFLLPQKFELTYIGNDGEQHRPVVIHRGVVSTMERFVAFLTEETKGAFPTWLAPKQVEIIPVNVDLHYDYARLIQDELKSQGVRVEIDDRNEKMGYKIREAQMQKIPYQLVVGDKEVENKEVNVRKYGSQDQETLEKDEFIWNLVDEIRLKKQR</sequence>
<reference key="1">
    <citation type="journal article" date="2005" name="Proc. Natl. Acad. Sci. U.S.A.">
        <title>Whole genome sequence of Staphylococcus saprophyticus reveals the pathogenesis of uncomplicated urinary tract infection.</title>
        <authorList>
            <person name="Kuroda M."/>
            <person name="Yamashita A."/>
            <person name="Hirakawa H."/>
            <person name="Kumano M."/>
            <person name="Morikawa K."/>
            <person name="Higashide M."/>
            <person name="Maruyama A."/>
            <person name="Inose Y."/>
            <person name="Matoba K."/>
            <person name="Toh H."/>
            <person name="Kuhara S."/>
            <person name="Hattori M."/>
            <person name="Ohta T."/>
        </authorList>
    </citation>
    <scope>NUCLEOTIDE SEQUENCE [LARGE SCALE GENOMIC DNA]</scope>
    <source>
        <strain>ATCC 15305 / DSM 20229 / NCIMB 8711 / NCTC 7292 / S-41</strain>
    </source>
</reference>
<protein>
    <recommendedName>
        <fullName evidence="1">Threonine--tRNA ligase</fullName>
        <ecNumber evidence="1">6.1.1.3</ecNumber>
    </recommendedName>
    <alternativeName>
        <fullName evidence="1">Threonyl-tRNA synthetase</fullName>
        <shortName evidence="1">ThrRS</shortName>
    </alternativeName>
</protein>
<organism>
    <name type="scientific">Staphylococcus saprophyticus subsp. saprophyticus (strain ATCC 15305 / DSM 20229 / NCIMB 8711 / NCTC 7292 / S-41)</name>
    <dbReference type="NCBI Taxonomy" id="342451"/>
    <lineage>
        <taxon>Bacteria</taxon>
        <taxon>Bacillati</taxon>
        <taxon>Bacillota</taxon>
        <taxon>Bacilli</taxon>
        <taxon>Bacillales</taxon>
        <taxon>Staphylococcaceae</taxon>
        <taxon>Staphylococcus</taxon>
    </lineage>
</organism>
<feature type="chain" id="PRO_1000020524" description="Threonine--tRNA ligase">
    <location>
        <begin position="1"/>
        <end position="645"/>
    </location>
</feature>
<feature type="domain" description="TGS" evidence="2">
    <location>
        <begin position="1"/>
        <end position="63"/>
    </location>
</feature>
<feature type="region of interest" description="Catalytic" evidence="1">
    <location>
        <begin position="242"/>
        <end position="540"/>
    </location>
</feature>
<feature type="binding site" evidence="1">
    <location>
        <position position="336"/>
    </location>
    <ligand>
        <name>Zn(2+)</name>
        <dbReference type="ChEBI" id="CHEBI:29105"/>
    </ligand>
</feature>
<feature type="binding site" evidence="1">
    <location>
        <position position="387"/>
    </location>
    <ligand>
        <name>Zn(2+)</name>
        <dbReference type="ChEBI" id="CHEBI:29105"/>
    </ligand>
</feature>
<feature type="binding site" evidence="1">
    <location>
        <position position="517"/>
    </location>
    <ligand>
        <name>Zn(2+)</name>
        <dbReference type="ChEBI" id="CHEBI:29105"/>
    </ligand>
</feature>
<proteinExistence type="inferred from homology"/>
<keyword id="KW-0030">Aminoacyl-tRNA synthetase</keyword>
<keyword id="KW-0067">ATP-binding</keyword>
<keyword id="KW-0963">Cytoplasm</keyword>
<keyword id="KW-0436">Ligase</keyword>
<keyword id="KW-0479">Metal-binding</keyword>
<keyword id="KW-0547">Nucleotide-binding</keyword>
<keyword id="KW-0648">Protein biosynthesis</keyword>
<keyword id="KW-1185">Reference proteome</keyword>
<keyword id="KW-0694">RNA-binding</keyword>
<keyword id="KW-0820">tRNA-binding</keyword>
<keyword id="KW-0862">Zinc</keyword>
<gene>
    <name evidence="1" type="primary">thrS</name>
    <name type="ordered locus">SSP1082</name>
</gene>
<name>SYT_STAS1</name>